<organism>
    <name type="scientific">Anthoceros angustus</name>
    <name type="common">Hornwort</name>
    <name type="synonym">Anthoceros formosae</name>
    <dbReference type="NCBI Taxonomy" id="48387"/>
    <lineage>
        <taxon>Eukaryota</taxon>
        <taxon>Viridiplantae</taxon>
        <taxon>Streptophyta</taxon>
        <taxon>Embryophyta</taxon>
        <taxon>Anthocerotophyta</taxon>
        <taxon>Anthocerotopsida</taxon>
        <taxon>Anthocerotidae</taxon>
        <taxon>Anthocerotales</taxon>
        <taxon>Anthocerotaceae</taxon>
        <taxon>Anthoceros</taxon>
    </lineage>
</organism>
<accession>Q85AM2</accession>
<geneLocation type="chloroplast"/>
<gene>
    <name type="primary">rps8</name>
</gene>
<name>RR8_ANTAG</name>
<dbReference type="EMBL" id="AB086179">
    <property type="protein sequence ID" value="BAC55385.1"/>
    <property type="molecule type" value="Genomic_DNA"/>
</dbReference>
<dbReference type="EMBL" id="AB087468">
    <property type="protein sequence ID" value="BAC55482.1"/>
    <property type="molecule type" value="mRNA"/>
</dbReference>
<dbReference type="RefSeq" id="NP_777449.1">
    <property type="nucleotide sequence ID" value="NC_004543.1"/>
</dbReference>
<dbReference type="SMR" id="Q85AM2"/>
<dbReference type="GeneID" id="2553437"/>
<dbReference type="GO" id="GO:0009507">
    <property type="term" value="C:chloroplast"/>
    <property type="evidence" value="ECO:0007669"/>
    <property type="project" value="UniProtKB-SubCell"/>
</dbReference>
<dbReference type="GO" id="GO:1990904">
    <property type="term" value="C:ribonucleoprotein complex"/>
    <property type="evidence" value="ECO:0007669"/>
    <property type="project" value="UniProtKB-KW"/>
</dbReference>
<dbReference type="GO" id="GO:0005840">
    <property type="term" value="C:ribosome"/>
    <property type="evidence" value="ECO:0007669"/>
    <property type="project" value="UniProtKB-KW"/>
</dbReference>
<dbReference type="GO" id="GO:0019843">
    <property type="term" value="F:rRNA binding"/>
    <property type="evidence" value="ECO:0007669"/>
    <property type="project" value="UniProtKB-UniRule"/>
</dbReference>
<dbReference type="GO" id="GO:0003735">
    <property type="term" value="F:structural constituent of ribosome"/>
    <property type="evidence" value="ECO:0007669"/>
    <property type="project" value="InterPro"/>
</dbReference>
<dbReference type="GO" id="GO:0006412">
    <property type="term" value="P:translation"/>
    <property type="evidence" value="ECO:0007669"/>
    <property type="project" value="UniProtKB-UniRule"/>
</dbReference>
<dbReference type="FunFam" id="3.30.1370.30:FF:000002">
    <property type="entry name" value="30S ribosomal protein S8"/>
    <property type="match status" value="1"/>
</dbReference>
<dbReference type="FunFam" id="3.30.1490.10:FF:000001">
    <property type="entry name" value="30S ribosomal protein S8"/>
    <property type="match status" value="1"/>
</dbReference>
<dbReference type="Gene3D" id="3.30.1370.30">
    <property type="match status" value="1"/>
</dbReference>
<dbReference type="Gene3D" id="3.30.1490.10">
    <property type="match status" value="1"/>
</dbReference>
<dbReference type="HAMAP" id="MF_01302_B">
    <property type="entry name" value="Ribosomal_uS8_B"/>
    <property type="match status" value="1"/>
</dbReference>
<dbReference type="InterPro" id="IPR000630">
    <property type="entry name" value="Ribosomal_uS8"/>
</dbReference>
<dbReference type="InterPro" id="IPR047863">
    <property type="entry name" value="Ribosomal_uS8_CS"/>
</dbReference>
<dbReference type="InterPro" id="IPR035987">
    <property type="entry name" value="Ribosomal_uS8_sf"/>
</dbReference>
<dbReference type="NCBIfam" id="NF001109">
    <property type="entry name" value="PRK00136.1"/>
    <property type="match status" value="1"/>
</dbReference>
<dbReference type="PANTHER" id="PTHR11758">
    <property type="entry name" value="40S RIBOSOMAL PROTEIN S15A"/>
    <property type="match status" value="1"/>
</dbReference>
<dbReference type="Pfam" id="PF00410">
    <property type="entry name" value="Ribosomal_S8"/>
    <property type="match status" value="1"/>
</dbReference>
<dbReference type="SUPFAM" id="SSF56047">
    <property type="entry name" value="Ribosomal protein S8"/>
    <property type="match status" value="1"/>
</dbReference>
<dbReference type="PROSITE" id="PS00053">
    <property type="entry name" value="RIBOSOMAL_S8"/>
    <property type="match status" value="1"/>
</dbReference>
<keyword id="KW-0150">Chloroplast</keyword>
<keyword id="KW-0934">Plastid</keyword>
<keyword id="KW-0687">Ribonucleoprotein</keyword>
<keyword id="KW-0689">Ribosomal protein</keyword>
<keyword id="KW-0691">RNA editing</keyword>
<keyword id="KW-0694">RNA-binding</keyword>
<keyword id="KW-0699">rRNA-binding</keyword>
<proteinExistence type="evidence at transcript level"/>
<protein>
    <recommendedName>
        <fullName evidence="4">Small ribosomal subunit protein uS8c</fullName>
    </recommendedName>
    <alternativeName>
        <fullName>30S ribosomal protein S8, chloroplastic</fullName>
    </alternativeName>
</protein>
<sequence>MGNDIIANMITAIRNANLGRAETVEVPATNLTRNIAKILLREGFIESFSEHQENKNSFLIFILKYRGKKRKPYITTLRRISKPGLRIYSNYQEIPRVLGGTGIVILSTSRGIITDREARQKQVGGEILCYVW</sequence>
<comment type="function">
    <text evidence="1">One of the primary rRNA binding proteins, it binds directly to 16S rRNA central domain where it helps coordinate assembly of the platform of the 30S subunit.</text>
</comment>
<comment type="subunit">
    <text evidence="1">Part of the 30S ribosomal subunit.</text>
</comment>
<comment type="subcellular location">
    <subcellularLocation>
        <location>Plastid</location>
        <location>Chloroplast</location>
    </subcellularLocation>
</comment>
<comment type="RNA editing">
    <location>
        <position position="31" evidence="2 3"/>
    </location>
    <location>
        <position position="66" evidence="2 3"/>
    </location>
    <location>
        <position position="89" evidence="2 3"/>
    </location>
    <location>
        <position position="105" evidence="2 3"/>
    </location>
    <location>
        <position position="107" evidence="2 3"/>
    </location>
    <location>
        <position position="110" evidence="2 3"/>
    </location>
    <text>The nonsense codons at positions 66 and 110 are modfied to sense codons.</text>
</comment>
<comment type="similarity">
    <text evidence="4">Belongs to the universal ribosomal protein uS8 family.</text>
</comment>
<evidence type="ECO:0000250" key="1"/>
<evidence type="ECO:0000269" key="2">
    <source>
    </source>
</evidence>
<evidence type="ECO:0000269" key="3">
    <source>
    </source>
</evidence>
<evidence type="ECO:0000305" key="4"/>
<reference key="1">
    <citation type="journal article" date="2003" name="Nucleic Acids Res.">
        <title>The complete nucleotide sequence of the hornwort (Anthoceros formosae) chloroplast genome: insight into the earliest land plants.</title>
        <authorList>
            <person name="Kugita M."/>
            <person name="Kaneko A."/>
            <person name="Yamamoto Y."/>
            <person name="Takeya Y."/>
            <person name="Matsumoto T."/>
            <person name="Yoshinaga K."/>
        </authorList>
    </citation>
    <scope>NUCLEOTIDE SEQUENCE [LARGE SCALE GENOMIC DNA]</scope>
    <scope>RNA EDITING</scope>
</reference>
<reference key="2">
    <citation type="journal article" date="2003" name="Nucleic Acids Res.">
        <title>RNA editing in hornwort chloroplasts makes more than half the genes functional.</title>
        <authorList>
            <person name="Kugita M."/>
            <person name="Yamamoto Y."/>
            <person name="Fujikawa T."/>
            <person name="Matsumoto T."/>
            <person name="Yoshinaga K."/>
        </authorList>
    </citation>
    <scope>NUCLEOTIDE SEQUENCE [MRNA]</scope>
    <scope>RNA EDITING</scope>
    <source>
        <tissue>Thallus</tissue>
    </source>
</reference>
<feature type="chain" id="PRO_0000126560" description="Small ribosomal subunit protein uS8c">
    <location>
        <begin position="1"/>
        <end position="132"/>
    </location>
</feature>